<name>YKK3_CAEEL</name>
<sequence length="366" mass="40822">MGILEKIAEIEHEISRTQKNKATEYHLGLLKAKLAKYRQQLLEPTGKGGAKGEGFDVMKSGDARVAMVGFPSVGKSTLLSSMTSTHSEAAGYEFTTLTCIPGVISYNGANIQLLDLPGIIEGASQGKGRGRQVISVAKTADLILMMLDAGKSDQQKMLLERELEAVGIRLNKKPPNIYVKQKKVGGVKFTNTVPLTHCNEKLIMTVLHEYKIFNADVIFREDCTVDEFIDVIQGNRVYMTCLYVYNKVDQISIEEIDRLARMPHHVVISCEMNLNMDYLLEKMWEYLALVRVYTKKPGNAPDLGPEDGIILRGGATIEHCCHALHRSIAAQLRYAIVWGTSTKFSPQRVGLHHKLDHEDVIQIVKK</sequence>
<accession>P34280</accession>
<proteinExistence type="inferred from homology"/>
<organism>
    <name type="scientific">Caenorhabditis elegans</name>
    <dbReference type="NCBI Taxonomy" id="6239"/>
    <lineage>
        <taxon>Eukaryota</taxon>
        <taxon>Metazoa</taxon>
        <taxon>Ecdysozoa</taxon>
        <taxon>Nematoda</taxon>
        <taxon>Chromadorea</taxon>
        <taxon>Rhabditida</taxon>
        <taxon>Rhabditina</taxon>
        <taxon>Rhabditomorpha</taxon>
        <taxon>Rhabditoidea</taxon>
        <taxon>Rhabditidae</taxon>
        <taxon>Peloderinae</taxon>
        <taxon>Caenorhabditis</taxon>
    </lineage>
</organism>
<feature type="chain" id="PRO_0000205451" description="Uncharacterized GTP-binding protein C02F5.3">
    <location>
        <begin position="1"/>
        <end position="366"/>
    </location>
</feature>
<feature type="domain" description="OBG-type G" evidence="1">
    <location>
        <begin position="63"/>
        <end position="288"/>
    </location>
</feature>
<feature type="domain" description="TGS" evidence="2">
    <location>
        <begin position="288"/>
        <end position="365"/>
    </location>
</feature>
<feature type="binding site" evidence="1">
    <location>
        <begin position="69"/>
        <end position="76"/>
    </location>
    <ligand>
        <name>GTP</name>
        <dbReference type="ChEBI" id="CHEBI:37565"/>
    </ligand>
</feature>
<feature type="binding site" evidence="1">
    <location>
        <begin position="115"/>
        <end position="119"/>
    </location>
    <ligand>
        <name>GTP</name>
        <dbReference type="ChEBI" id="CHEBI:37565"/>
    </ligand>
</feature>
<feature type="binding site" evidence="1">
    <location>
        <begin position="246"/>
        <end position="249"/>
    </location>
    <ligand>
        <name>GTP</name>
        <dbReference type="ChEBI" id="CHEBI:37565"/>
    </ligand>
</feature>
<protein>
    <recommendedName>
        <fullName>Uncharacterized GTP-binding protein C02F5.3</fullName>
    </recommendedName>
</protein>
<gene>
    <name type="ORF">C02F5.3</name>
</gene>
<keyword id="KW-0342">GTP-binding</keyword>
<keyword id="KW-0547">Nucleotide-binding</keyword>
<keyword id="KW-1185">Reference proteome</keyword>
<reference key="1">
    <citation type="journal article" date="1994" name="Nature">
        <title>2.2 Mb of contiguous nucleotide sequence from chromosome III of C. elegans.</title>
        <authorList>
            <person name="Wilson R."/>
            <person name="Ainscough R."/>
            <person name="Anderson K."/>
            <person name="Baynes C."/>
            <person name="Berks M."/>
            <person name="Bonfield J."/>
            <person name="Burton J."/>
            <person name="Connell M."/>
            <person name="Copsey T."/>
            <person name="Cooper J."/>
            <person name="Coulson A."/>
            <person name="Craxton M."/>
            <person name="Dear S."/>
            <person name="Du Z."/>
            <person name="Durbin R."/>
            <person name="Favello A."/>
            <person name="Fraser A."/>
            <person name="Fulton L."/>
            <person name="Gardner A."/>
            <person name="Green P."/>
            <person name="Hawkins T."/>
            <person name="Hillier L."/>
            <person name="Jier M."/>
            <person name="Johnston L."/>
            <person name="Jones M."/>
            <person name="Kershaw J."/>
            <person name="Kirsten J."/>
            <person name="Laisster N."/>
            <person name="Latreille P."/>
            <person name="Lightning J."/>
            <person name="Lloyd C."/>
            <person name="Mortimore B."/>
            <person name="O'Callaghan M."/>
            <person name="Parsons J."/>
            <person name="Percy C."/>
            <person name="Rifken L."/>
            <person name="Roopra A."/>
            <person name="Saunders D."/>
            <person name="Shownkeen R."/>
            <person name="Sims M."/>
            <person name="Smaldon N."/>
            <person name="Smith A."/>
            <person name="Smith M."/>
            <person name="Sonnhammer E."/>
            <person name="Staden R."/>
            <person name="Sulston J."/>
            <person name="Thierry-Mieg J."/>
            <person name="Thomas K."/>
            <person name="Vaudin M."/>
            <person name="Vaughan K."/>
            <person name="Waterston R."/>
            <person name="Watson A."/>
            <person name="Weinstock L."/>
            <person name="Wilkinson-Sproat J."/>
            <person name="Wohldman P."/>
        </authorList>
    </citation>
    <scope>NUCLEOTIDE SEQUENCE [LARGE SCALE GENOMIC DNA]</scope>
    <source>
        <strain>Bristol N2</strain>
    </source>
</reference>
<reference key="2">
    <citation type="journal article" date="1998" name="Science">
        <title>Genome sequence of the nematode C. elegans: a platform for investigating biology.</title>
        <authorList>
            <consortium name="The C. elegans sequencing consortium"/>
        </authorList>
    </citation>
    <scope>NUCLEOTIDE SEQUENCE [LARGE SCALE GENOMIC DNA]</scope>
    <source>
        <strain>Bristol N2</strain>
    </source>
</reference>
<dbReference type="EMBL" id="FO080288">
    <property type="protein sequence ID" value="CCD62627.1"/>
    <property type="molecule type" value="Genomic_DNA"/>
</dbReference>
<dbReference type="PIR" id="S44605">
    <property type="entry name" value="S44605"/>
</dbReference>
<dbReference type="RefSeq" id="NP_498808.2">
    <property type="nucleotide sequence ID" value="NM_066407.6"/>
</dbReference>
<dbReference type="SMR" id="P34280"/>
<dbReference type="BioGRID" id="41367">
    <property type="interactions" value="5"/>
</dbReference>
<dbReference type="FunCoup" id="P34280">
    <property type="interactions" value="3314"/>
</dbReference>
<dbReference type="STRING" id="6239.C02F5.3.1"/>
<dbReference type="PaxDb" id="6239-C02F5.3"/>
<dbReference type="PeptideAtlas" id="P34280"/>
<dbReference type="EnsemblMetazoa" id="C02F5.3.1">
    <property type="protein sequence ID" value="C02F5.3.1"/>
    <property type="gene ID" value="WBGene00015346"/>
</dbReference>
<dbReference type="GeneID" id="176163"/>
<dbReference type="KEGG" id="cel:CELE_C02F5.3"/>
<dbReference type="UCSC" id="C02F5.3">
    <property type="organism name" value="c. elegans"/>
</dbReference>
<dbReference type="AGR" id="WB:WBGene00015346"/>
<dbReference type="CTD" id="176163"/>
<dbReference type="WormBase" id="C02F5.3">
    <property type="protein sequence ID" value="CE36094"/>
    <property type="gene ID" value="WBGene00015346"/>
</dbReference>
<dbReference type="eggNOG" id="KOG1486">
    <property type="taxonomic scope" value="Eukaryota"/>
</dbReference>
<dbReference type="GeneTree" id="ENSGT00940000153340"/>
<dbReference type="HOGENOM" id="CLU_044997_0_0_1"/>
<dbReference type="InParanoid" id="P34280"/>
<dbReference type="OMA" id="DVCDQVH"/>
<dbReference type="OrthoDB" id="1708588at2759"/>
<dbReference type="PhylomeDB" id="P34280"/>
<dbReference type="PRO" id="PR:P34280"/>
<dbReference type="Proteomes" id="UP000001940">
    <property type="component" value="Chromosome III"/>
</dbReference>
<dbReference type="Bgee" id="WBGene00015346">
    <property type="expression patterns" value="Expressed in germ line (C elegans) and 4 other cell types or tissues"/>
</dbReference>
<dbReference type="GO" id="GO:0005737">
    <property type="term" value="C:cytoplasm"/>
    <property type="evidence" value="ECO:0000318"/>
    <property type="project" value="GO_Central"/>
</dbReference>
<dbReference type="GO" id="GO:0005525">
    <property type="term" value="F:GTP binding"/>
    <property type="evidence" value="ECO:0000318"/>
    <property type="project" value="GO_Central"/>
</dbReference>
<dbReference type="GO" id="GO:0003924">
    <property type="term" value="F:GTPase activity"/>
    <property type="evidence" value="ECO:0007669"/>
    <property type="project" value="InterPro"/>
</dbReference>
<dbReference type="GO" id="GO:0002181">
    <property type="term" value="P:cytoplasmic translation"/>
    <property type="evidence" value="ECO:0000318"/>
    <property type="project" value="GO_Central"/>
</dbReference>
<dbReference type="CDD" id="cd01896">
    <property type="entry name" value="DRG"/>
    <property type="match status" value="1"/>
</dbReference>
<dbReference type="CDD" id="cd17231">
    <property type="entry name" value="TGS_DRG2"/>
    <property type="match status" value="1"/>
</dbReference>
<dbReference type="FunFam" id="3.10.20.30:FF:000016">
    <property type="entry name" value="Developmentally-regulated GTP-binding protein 2"/>
    <property type="match status" value="1"/>
</dbReference>
<dbReference type="FunFam" id="3.40.50.300:FF:000740">
    <property type="entry name" value="Putative GTP-binding protein 1"/>
    <property type="match status" value="1"/>
</dbReference>
<dbReference type="Gene3D" id="3.10.20.30">
    <property type="match status" value="1"/>
</dbReference>
<dbReference type="Gene3D" id="6.10.140.1070">
    <property type="match status" value="2"/>
</dbReference>
<dbReference type="InterPro" id="IPR012675">
    <property type="entry name" value="Beta-grasp_dom_sf"/>
</dbReference>
<dbReference type="InterPro" id="IPR045001">
    <property type="entry name" value="DRG"/>
</dbReference>
<dbReference type="InterPro" id="IPR031167">
    <property type="entry name" value="G_OBG"/>
</dbReference>
<dbReference type="InterPro" id="IPR006073">
    <property type="entry name" value="GTP-bd"/>
</dbReference>
<dbReference type="InterPro" id="IPR031662">
    <property type="entry name" value="GTP-binding_2"/>
</dbReference>
<dbReference type="InterPro" id="IPR006074">
    <property type="entry name" value="GTP1-OBG_CS"/>
</dbReference>
<dbReference type="InterPro" id="IPR027417">
    <property type="entry name" value="P-loop_NTPase"/>
</dbReference>
<dbReference type="InterPro" id="IPR005225">
    <property type="entry name" value="Small_GTP-bd"/>
</dbReference>
<dbReference type="InterPro" id="IPR004095">
    <property type="entry name" value="TGS"/>
</dbReference>
<dbReference type="InterPro" id="IPR012676">
    <property type="entry name" value="TGS-like"/>
</dbReference>
<dbReference type="NCBIfam" id="TIGR00231">
    <property type="entry name" value="small_GTP"/>
    <property type="match status" value="1"/>
</dbReference>
<dbReference type="PANTHER" id="PTHR43127">
    <property type="entry name" value="DEVELOPMENTALLY-REGULATED GTP-BINDING PROTEIN 2"/>
    <property type="match status" value="1"/>
</dbReference>
<dbReference type="Pfam" id="PF01926">
    <property type="entry name" value="MMR_HSR1"/>
    <property type="match status" value="1"/>
</dbReference>
<dbReference type="Pfam" id="PF16897">
    <property type="entry name" value="MMR_HSR1_Xtn"/>
    <property type="match status" value="1"/>
</dbReference>
<dbReference type="Pfam" id="PF02824">
    <property type="entry name" value="TGS"/>
    <property type="match status" value="1"/>
</dbReference>
<dbReference type="PRINTS" id="PR00326">
    <property type="entry name" value="GTP1OBG"/>
</dbReference>
<dbReference type="SUPFAM" id="SSF52540">
    <property type="entry name" value="P-loop containing nucleoside triphosphate hydrolases"/>
    <property type="match status" value="1"/>
</dbReference>
<dbReference type="SUPFAM" id="SSF81271">
    <property type="entry name" value="TGS-like"/>
    <property type="match status" value="1"/>
</dbReference>
<dbReference type="PROSITE" id="PS51710">
    <property type="entry name" value="G_OBG"/>
    <property type="match status" value="1"/>
</dbReference>
<dbReference type="PROSITE" id="PS00905">
    <property type="entry name" value="GTP1_OBG"/>
    <property type="match status" value="1"/>
</dbReference>
<dbReference type="PROSITE" id="PS51880">
    <property type="entry name" value="TGS"/>
    <property type="match status" value="1"/>
</dbReference>
<comment type="similarity">
    <text evidence="1">Belongs to the TRAFAC class OBG-HflX-like GTPase superfamily. OBG GTPase family.</text>
</comment>
<evidence type="ECO:0000255" key="1">
    <source>
        <dbReference type="PROSITE-ProRule" id="PRU01047"/>
    </source>
</evidence>
<evidence type="ECO:0000255" key="2">
    <source>
        <dbReference type="PROSITE-ProRule" id="PRU01228"/>
    </source>
</evidence>